<keyword id="KW-1185">Reference proteome</keyword>
<keyword id="KW-0732">Signal</keyword>
<reference key="1">
    <citation type="journal article" date="2002" name="Nature">
        <title>The genome sequence of Schizosaccharomyces pombe.</title>
        <authorList>
            <person name="Wood V."/>
            <person name="Gwilliam R."/>
            <person name="Rajandream M.A."/>
            <person name="Lyne M.H."/>
            <person name="Lyne R."/>
            <person name="Stewart A."/>
            <person name="Sgouros J.G."/>
            <person name="Peat N."/>
            <person name="Hayles J."/>
            <person name="Baker S.G."/>
            <person name="Basham D."/>
            <person name="Bowman S."/>
            <person name="Brooks K."/>
            <person name="Brown D."/>
            <person name="Brown S."/>
            <person name="Chillingworth T."/>
            <person name="Churcher C.M."/>
            <person name="Collins M."/>
            <person name="Connor R."/>
            <person name="Cronin A."/>
            <person name="Davis P."/>
            <person name="Feltwell T."/>
            <person name="Fraser A."/>
            <person name="Gentles S."/>
            <person name="Goble A."/>
            <person name="Hamlin N."/>
            <person name="Harris D.E."/>
            <person name="Hidalgo J."/>
            <person name="Hodgson G."/>
            <person name="Holroyd S."/>
            <person name="Hornsby T."/>
            <person name="Howarth S."/>
            <person name="Huckle E.J."/>
            <person name="Hunt S."/>
            <person name="Jagels K."/>
            <person name="James K.D."/>
            <person name="Jones L."/>
            <person name="Jones M."/>
            <person name="Leather S."/>
            <person name="McDonald S."/>
            <person name="McLean J."/>
            <person name="Mooney P."/>
            <person name="Moule S."/>
            <person name="Mungall K.L."/>
            <person name="Murphy L.D."/>
            <person name="Niblett D."/>
            <person name="Odell C."/>
            <person name="Oliver K."/>
            <person name="O'Neil S."/>
            <person name="Pearson D."/>
            <person name="Quail M.A."/>
            <person name="Rabbinowitsch E."/>
            <person name="Rutherford K.M."/>
            <person name="Rutter S."/>
            <person name="Saunders D."/>
            <person name="Seeger K."/>
            <person name="Sharp S."/>
            <person name="Skelton J."/>
            <person name="Simmonds M.N."/>
            <person name="Squares R."/>
            <person name="Squares S."/>
            <person name="Stevens K."/>
            <person name="Taylor K."/>
            <person name="Taylor R.G."/>
            <person name="Tivey A."/>
            <person name="Walsh S.V."/>
            <person name="Warren T."/>
            <person name="Whitehead S."/>
            <person name="Woodward J.R."/>
            <person name="Volckaert G."/>
            <person name="Aert R."/>
            <person name="Robben J."/>
            <person name="Grymonprez B."/>
            <person name="Weltjens I."/>
            <person name="Vanstreels E."/>
            <person name="Rieger M."/>
            <person name="Schaefer M."/>
            <person name="Mueller-Auer S."/>
            <person name="Gabel C."/>
            <person name="Fuchs M."/>
            <person name="Duesterhoeft A."/>
            <person name="Fritzc C."/>
            <person name="Holzer E."/>
            <person name="Moestl D."/>
            <person name="Hilbert H."/>
            <person name="Borzym K."/>
            <person name="Langer I."/>
            <person name="Beck A."/>
            <person name="Lehrach H."/>
            <person name="Reinhardt R."/>
            <person name="Pohl T.M."/>
            <person name="Eger P."/>
            <person name="Zimmermann W."/>
            <person name="Wedler H."/>
            <person name="Wambutt R."/>
            <person name="Purnelle B."/>
            <person name="Goffeau A."/>
            <person name="Cadieu E."/>
            <person name="Dreano S."/>
            <person name="Gloux S."/>
            <person name="Lelaure V."/>
            <person name="Mottier S."/>
            <person name="Galibert F."/>
            <person name="Aves S.J."/>
            <person name="Xiang Z."/>
            <person name="Hunt C."/>
            <person name="Moore K."/>
            <person name="Hurst S.M."/>
            <person name="Lucas M."/>
            <person name="Rochet M."/>
            <person name="Gaillardin C."/>
            <person name="Tallada V.A."/>
            <person name="Garzon A."/>
            <person name="Thode G."/>
            <person name="Daga R.R."/>
            <person name="Cruzado L."/>
            <person name="Jimenez J."/>
            <person name="Sanchez M."/>
            <person name="del Rey F."/>
            <person name="Benito J."/>
            <person name="Dominguez A."/>
            <person name="Revuelta J.L."/>
            <person name="Moreno S."/>
            <person name="Armstrong J."/>
            <person name="Forsburg S.L."/>
            <person name="Cerutti L."/>
            <person name="Lowe T."/>
            <person name="McCombie W.R."/>
            <person name="Paulsen I."/>
            <person name="Potashkin J."/>
            <person name="Shpakovski G.V."/>
            <person name="Ussery D."/>
            <person name="Barrell B.G."/>
            <person name="Nurse P."/>
        </authorList>
    </citation>
    <scope>NUCLEOTIDE SEQUENCE [LARGE SCALE GENOMIC DNA]</scope>
    <source>
        <strain>972 / ATCC 24843</strain>
    </source>
</reference>
<proteinExistence type="inferred from homology"/>
<name>YEH5_SCHPO</name>
<feature type="signal peptide" evidence="1">
    <location>
        <begin position="1"/>
        <end position="21"/>
    </location>
</feature>
<feature type="chain" id="PRO_0000014197" description="Uncharacterized protein C23H4.05c">
    <location>
        <begin position="22"/>
        <end position="97"/>
    </location>
</feature>
<sequence>MLLHGLGRMNIIFICFPSLACLLTSRTPLCAPLFSHLDGMTPCPIDCGFAVGRSRGGGFGGKPESNSLHYDTMHKQHAMPFFIINPTEWKRNFCNTG</sequence>
<evidence type="ECO:0000255" key="1"/>
<organism>
    <name type="scientific">Schizosaccharomyces pombe (strain 972 / ATCC 24843)</name>
    <name type="common">Fission yeast</name>
    <dbReference type="NCBI Taxonomy" id="284812"/>
    <lineage>
        <taxon>Eukaryota</taxon>
        <taxon>Fungi</taxon>
        <taxon>Dikarya</taxon>
        <taxon>Ascomycota</taxon>
        <taxon>Taphrinomycotina</taxon>
        <taxon>Schizosaccharomycetes</taxon>
        <taxon>Schizosaccharomycetales</taxon>
        <taxon>Schizosaccharomycetaceae</taxon>
        <taxon>Schizosaccharomyces</taxon>
    </lineage>
</organism>
<protein>
    <recommendedName>
        <fullName>Uncharacterized protein C23H4.05c</fullName>
    </recommendedName>
</protein>
<gene>
    <name type="ORF">SPAC23H4.05c</name>
</gene>
<dbReference type="EMBL" id="CU329670">
    <property type="protein sequence ID" value="CAB11674.1"/>
    <property type="molecule type" value="Genomic_DNA"/>
</dbReference>
<dbReference type="PIR" id="T38323">
    <property type="entry name" value="T38323"/>
</dbReference>
<dbReference type="RefSeq" id="NP_593401.1">
    <property type="nucleotide sequence ID" value="NM_001018833.2"/>
</dbReference>
<dbReference type="STRING" id="284812.O13948"/>
<dbReference type="PaxDb" id="4896-SPAC23H4.05c.1"/>
<dbReference type="EnsemblFungi" id="SPAC23H4.05c.1">
    <property type="protein sequence ID" value="SPAC23H4.05c.1:pep"/>
    <property type="gene ID" value="SPAC23H4.05c"/>
</dbReference>
<dbReference type="KEGG" id="spo:2541883"/>
<dbReference type="PomBase" id="SPAC23H4.05c"/>
<dbReference type="VEuPathDB" id="FungiDB:SPAC23H4.05c"/>
<dbReference type="HOGENOM" id="CLU_2347905_0_0_1"/>
<dbReference type="InParanoid" id="O13948"/>
<dbReference type="PRO" id="PR:O13948"/>
<dbReference type="Proteomes" id="UP000002485">
    <property type="component" value="Chromosome I"/>
</dbReference>
<dbReference type="GO" id="GO:0005739">
    <property type="term" value="C:mitochondrion"/>
    <property type="evidence" value="ECO:0007005"/>
    <property type="project" value="PomBase"/>
</dbReference>
<accession>O13948</accession>